<name>ZITB_YERPS</name>
<protein>
    <recommendedName>
        <fullName evidence="1">Zinc transporter ZitB</fullName>
    </recommendedName>
</protein>
<comment type="function">
    <text evidence="1">Involved in zinc efflux across the cytoplasmic membrane, thus reducing zinc accumulation in the cytoplasm and rendering bacteria more resistant to zinc. It may contribute to zinc homeostasis at low concentrations of zinc.</text>
</comment>
<comment type="subcellular location">
    <subcellularLocation>
        <location evidence="1">Cell inner membrane</location>
        <topology evidence="1">Multi-pass membrane protein</topology>
    </subcellularLocation>
</comment>
<comment type="similarity">
    <text evidence="1">Belongs to the cation diffusion facilitator (CDF) transporter (TC 2.A.4) family. SLC30A subfamily.</text>
</comment>
<dbReference type="EMBL" id="BX936398">
    <property type="protein sequence ID" value="CAH20404.1"/>
    <property type="molecule type" value="Genomic_DNA"/>
</dbReference>
<dbReference type="RefSeq" id="WP_011191947.1">
    <property type="nucleotide sequence ID" value="NC_006155.1"/>
</dbReference>
<dbReference type="SMR" id="Q66D85"/>
<dbReference type="KEGG" id="ypo:BZ17_1366"/>
<dbReference type="KEGG" id="yps:YPTB1164"/>
<dbReference type="PATRIC" id="fig|273123.14.peg.1458"/>
<dbReference type="Proteomes" id="UP000001011">
    <property type="component" value="Chromosome"/>
</dbReference>
<dbReference type="GO" id="GO:0005886">
    <property type="term" value="C:plasma membrane"/>
    <property type="evidence" value="ECO:0007669"/>
    <property type="project" value="UniProtKB-SubCell"/>
</dbReference>
<dbReference type="GO" id="GO:0005385">
    <property type="term" value="F:zinc ion transmembrane transporter activity"/>
    <property type="evidence" value="ECO:0007669"/>
    <property type="project" value="InterPro"/>
</dbReference>
<dbReference type="FunFam" id="1.20.1510.10:FF:000016">
    <property type="entry name" value="Zinc transporter ZitB"/>
    <property type="match status" value="1"/>
</dbReference>
<dbReference type="Gene3D" id="1.20.1510.10">
    <property type="entry name" value="Cation efflux protein transmembrane domain"/>
    <property type="match status" value="1"/>
</dbReference>
<dbReference type="HAMAP" id="MF_00552">
    <property type="entry name" value="ZitB"/>
    <property type="match status" value="1"/>
</dbReference>
<dbReference type="InterPro" id="IPR002524">
    <property type="entry name" value="Cation_efflux"/>
</dbReference>
<dbReference type="InterPro" id="IPR036837">
    <property type="entry name" value="Cation_efflux_CTD_sf"/>
</dbReference>
<dbReference type="InterPro" id="IPR027469">
    <property type="entry name" value="Cation_efflux_TMD_sf"/>
</dbReference>
<dbReference type="InterPro" id="IPR050681">
    <property type="entry name" value="CDF/SLC30A"/>
</dbReference>
<dbReference type="InterPro" id="IPR023500">
    <property type="entry name" value="Zn_transptr_ZitB"/>
</dbReference>
<dbReference type="NCBIfam" id="TIGR01297">
    <property type="entry name" value="CDF"/>
    <property type="match status" value="1"/>
</dbReference>
<dbReference type="NCBIfam" id="NF002923">
    <property type="entry name" value="PRK03557.1"/>
    <property type="match status" value="1"/>
</dbReference>
<dbReference type="PANTHER" id="PTHR11562">
    <property type="entry name" value="CATION EFFLUX PROTEIN/ ZINC TRANSPORTER"/>
    <property type="match status" value="1"/>
</dbReference>
<dbReference type="PANTHER" id="PTHR11562:SF17">
    <property type="entry name" value="RE54080P-RELATED"/>
    <property type="match status" value="1"/>
</dbReference>
<dbReference type="Pfam" id="PF01545">
    <property type="entry name" value="Cation_efflux"/>
    <property type="match status" value="1"/>
</dbReference>
<dbReference type="SUPFAM" id="SSF160240">
    <property type="entry name" value="Cation efflux protein cytoplasmic domain-like"/>
    <property type="match status" value="1"/>
</dbReference>
<dbReference type="SUPFAM" id="SSF161111">
    <property type="entry name" value="Cation efflux protein transmembrane domain-like"/>
    <property type="match status" value="1"/>
</dbReference>
<gene>
    <name evidence="1" type="primary">zitB</name>
    <name type="ordered locus">YPTB1164</name>
</gene>
<reference key="1">
    <citation type="journal article" date="2004" name="Proc. Natl. Acad. Sci. U.S.A.">
        <title>Insights into the evolution of Yersinia pestis through whole-genome comparison with Yersinia pseudotuberculosis.</title>
        <authorList>
            <person name="Chain P.S.G."/>
            <person name="Carniel E."/>
            <person name="Larimer F.W."/>
            <person name="Lamerdin J."/>
            <person name="Stoutland P.O."/>
            <person name="Regala W.M."/>
            <person name="Georgescu A.M."/>
            <person name="Vergez L.M."/>
            <person name="Land M.L."/>
            <person name="Motin V.L."/>
            <person name="Brubaker R.R."/>
            <person name="Fowler J."/>
            <person name="Hinnebusch J."/>
            <person name="Marceau M."/>
            <person name="Medigue C."/>
            <person name="Simonet M."/>
            <person name="Chenal-Francisque V."/>
            <person name="Souza B."/>
            <person name="Dacheux D."/>
            <person name="Elliott J.M."/>
            <person name="Derbise A."/>
            <person name="Hauser L.J."/>
            <person name="Garcia E."/>
        </authorList>
    </citation>
    <scope>NUCLEOTIDE SEQUENCE [LARGE SCALE GENOMIC DNA]</scope>
    <source>
        <strain>IP32953</strain>
    </source>
</reference>
<feature type="chain" id="PRO_0000206114" description="Zinc transporter ZitB">
    <location>
        <begin position="1"/>
        <end position="312"/>
    </location>
</feature>
<feature type="transmembrane region" description="Helical" evidence="1">
    <location>
        <begin position="16"/>
        <end position="36"/>
    </location>
</feature>
<feature type="transmembrane region" description="Helical" evidence="1">
    <location>
        <begin position="40"/>
        <end position="60"/>
    </location>
</feature>
<feature type="transmembrane region" description="Helical" evidence="1">
    <location>
        <begin position="81"/>
        <end position="101"/>
    </location>
</feature>
<feature type="transmembrane region" description="Helical" evidence="1">
    <location>
        <begin position="117"/>
        <end position="137"/>
    </location>
</feature>
<feature type="transmembrane region" description="Helical" evidence="1">
    <location>
        <begin position="153"/>
        <end position="173"/>
    </location>
</feature>
<feature type="transmembrane region" description="Helical" evidence="1">
    <location>
        <begin position="177"/>
        <end position="197"/>
    </location>
</feature>
<sequence>MAVSAIFSQDSNSKRLLIAFAITTLFMVTEAIGGWLSGSLALLADTGHMLTDSAALFIALMAVHFSQRKPDPRHTFGYLRLTTLAAFVNAAALLLIVILIVWEAVHRFFSPHEVMGTPMLIIAIAGLLANIFCFWILHKGEEEKNINVRAAALHVLSDLLGSVGAMIAAIVILTTGWTPIDPILSVLVSVLILRNAWRLLKESFHELLEGAPQEIDINKLRKDLCTNIYEVRNIHHVHLWQVGEQRLMTLHAQVIPPLDHDALLQRIQDYLLHHYRISHATVQMEYQHCGTPDCGINQAAPADGHHRHHHHE</sequence>
<proteinExistence type="inferred from homology"/>
<evidence type="ECO:0000255" key="1">
    <source>
        <dbReference type="HAMAP-Rule" id="MF_00552"/>
    </source>
</evidence>
<keyword id="KW-0997">Cell inner membrane</keyword>
<keyword id="KW-1003">Cell membrane</keyword>
<keyword id="KW-0406">Ion transport</keyword>
<keyword id="KW-0472">Membrane</keyword>
<keyword id="KW-0812">Transmembrane</keyword>
<keyword id="KW-1133">Transmembrane helix</keyword>
<keyword id="KW-0813">Transport</keyword>
<keyword id="KW-0862">Zinc</keyword>
<keyword id="KW-0864">Zinc transport</keyword>
<organism>
    <name type="scientific">Yersinia pseudotuberculosis serotype I (strain IP32953)</name>
    <dbReference type="NCBI Taxonomy" id="273123"/>
    <lineage>
        <taxon>Bacteria</taxon>
        <taxon>Pseudomonadati</taxon>
        <taxon>Pseudomonadota</taxon>
        <taxon>Gammaproteobacteria</taxon>
        <taxon>Enterobacterales</taxon>
        <taxon>Yersiniaceae</taxon>
        <taxon>Yersinia</taxon>
    </lineage>
</organism>
<accession>Q66D85</accession>